<dbReference type="EMBL" id="CP000878">
    <property type="protein sequence ID" value="ABX09601.1"/>
    <property type="molecule type" value="Genomic_DNA"/>
</dbReference>
<dbReference type="RefSeq" id="WP_012196221.1">
    <property type="nucleotide sequence ID" value="NC_009976.1"/>
</dbReference>
<dbReference type="SMR" id="A9BCN9"/>
<dbReference type="STRING" id="93059.P9211_16701"/>
<dbReference type="KEGG" id="pmj:P9211_16701"/>
<dbReference type="eggNOG" id="COG0255">
    <property type="taxonomic scope" value="Bacteria"/>
</dbReference>
<dbReference type="HOGENOM" id="CLU_158491_0_1_3"/>
<dbReference type="OrthoDB" id="9815192at2"/>
<dbReference type="Proteomes" id="UP000000788">
    <property type="component" value="Chromosome"/>
</dbReference>
<dbReference type="GO" id="GO:0022625">
    <property type="term" value="C:cytosolic large ribosomal subunit"/>
    <property type="evidence" value="ECO:0007669"/>
    <property type="project" value="TreeGrafter"/>
</dbReference>
<dbReference type="GO" id="GO:0003735">
    <property type="term" value="F:structural constituent of ribosome"/>
    <property type="evidence" value="ECO:0007669"/>
    <property type="project" value="InterPro"/>
</dbReference>
<dbReference type="GO" id="GO:0006412">
    <property type="term" value="P:translation"/>
    <property type="evidence" value="ECO:0007669"/>
    <property type="project" value="UniProtKB-UniRule"/>
</dbReference>
<dbReference type="CDD" id="cd00427">
    <property type="entry name" value="Ribosomal_L29_HIP"/>
    <property type="match status" value="1"/>
</dbReference>
<dbReference type="Gene3D" id="1.10.287.310">
    <property type="match status" value="1"/>
</dbReference>
<dbReference type="HAMAP" id="MF_00374">
    <property type="entry name" value="Ribosomal_uL29"/>
    <property type="match status" value="1"/>
</dbReference>
<dbReference type="InterPro" id="IPR050063">
    <property type="entry name" value="Ribosomal_protein_uL29"/>
</dbReference>
<dbReference type="InterPro" id="IPR001854">
    <property type="entry name" value="Ribosomal_uL29"/>
</dbReference>
<dbReference type="InterPro" id="IPR036049">
    <property type="entry name" value="Ribosomal_uL29_sf"/>
</dbReference>
<dbReference type="NCBIfam" id="TIGR00012">
    <property type="entry name" value="L29"/>
    <property type="match status" value="1"/>
</dbReference>
<dbReference type="PANTHER" id="PTHR10916">
    <property type="entry name" value="60S RIBOSOMAL PROTEIN L35/50S RIBOSOMAL PROTEIN L29"/>
    <property type="match status" value="1"/>
</dbReference>
<dbReference type="PANTHER" id="PTHR10916:SF0">
    <property type="entry name" value="LARGE RIBOSOMAL SUBUNIT PROTEIN UL29C"/>
    <property type="match status" value="1"/>
</dbReference>
<dbReference type="Pfam" id="PF00831">
    <property type="entry name" value="Ribosomal_L29"/>
    <property type="match status" value="1"/>
</dbReference>
<dbReference type="SUPFAM" id="SSF46561">
    <property type="entry name" value="Ribosomal protein L29 (L29p)"/>
    <property type="match status" value="1"/>
</dbReference>
<keyword id="KW-1185">Reference proteome</keyword>
<keyword id="KW-0687">Ribonucleoprotein</keyword>
<keyword id="KW-0689">Ribosomal protein</keyword>
<proteinExistence type="inferred from homology"/>
<accession>A9BCN9</accession>
<comment type="similarity">
    <text evidence="1">Belongs to the universal ribosomal protein uL29 family.</text>
</comment>
<sequence length="70" mass="8273">MARPEISEVTKLTDDDLKNKIDEIRKELFDLRFKRATRQLSETHRFKEARIQLAQLLTVQGDRNRSKTSS</sequence>
<name>RL29_PROM4</name>
<organism>
    <name type="scientific">Prochlorococcus marinus (strain MIT 9211)</name>
    <dbReference type="NCBI Taxonomy" id="93059"/>
    <lineage>
        <taxon>Bacteria</taxon>
        <taxon>Bacillati</taxon>
        <taxon>Cyanobacteriota</taxon>
        <taxon>Cyanophyceae</taxon>
        <taxon>Synechococcales</taxon>
        <taxon>Prochlorococcaceae</taxon>
        <taxon>Prochlorococcus</taxon>
    </lineage>
</organism>
<evidence type="ECO:0000255" key="1">
    <source>
        <dbReference type="HAMAP-Rule" id="MF_00374"/>
    </source>
</evidence>
<evidence type="ECO:0000305" key="2"/>
<protein>
    <recommendedName>
        <fullName evidence="1">Large ribosomal subunit protein uL29</fullName>
    </recommendedName>
    <alternativeName>
        <fullName evidence="2">50S ribosomal protein L29</fullName>
    </alternativeName>
</protein>
<reference key="1">
    <citation type="journal article" date="2007" name="PLoS Genet.">
        <title>Patterns and implications of gene gain and loss in the evolution of Prochlorococcus.</title>
        <authorList>
            <person name="Kettler G.C."/>
            <person name="Martiny A.C."/>
            <person name="Huang K."/>
            <person name="Zucker J."/>
            <person name="Coleman M.L."/>
            <person name="Rodrigue S."/>
            <person name="Chen F."/>
            <person name="Lapidus A."/>
            <person name="Ferriera S."/>
            <person name="Johnson J."/>
            <person name="Steglich C."/>
            <person name="Church G.M."/>
            <person name="Richardson P."/>
            <person name="Chisholm S.W."/>
        </authorList>
    </citation>
    <scope>NUCLEOTIDE SEQUENCE [LARGE SCALE GENOMIC DNA]</scope>
    <source>
        <strain>MIT 9211</strain>
    </source>
</reference>
<feature type="chain" id="PRO_1000121799" description="Large ribosomal subunit protein uL29">
    <location>
        <begin position="1"/>
        <end position="70"/>
    </location>
</feature>
<gene>
    <name evidence="1" type="primary">rpmC</name>
    <name evidence="1" type="synonym">rpl29</name>
    <name type="ordered locus">P9211_16701</name>
</gene>